<sequence>MNAPRTPKPARKKPDSATPAKPVEPRKEASLHPRNRHQGRYDFPALIKTTPELAKFVITNPYGKESIDFASPDAVRVFNRALLKSFYGIQHWDIPADYLCPPVPGRADYIHFLADLLASNNDGVVPRGAIVNVLDIGMGANCVYPLIGNSEYRWHFLGSEIDPTAVAAARAIVQSNDLNKVIQLRQQENRKHILIGLLEPGERFDLTMCNPPFHASMEEATKGSERKWRALGKADPKRKLPVLNFGGQSAELWCEGGEARFVTQLIAESANFAHKVLWFSTLVSKASNLPAIETALKKAGALESQVVEMSQGQKQSRFVAWTFQTKSEQQIWRRERWVRK</sequence>
<feature type="chain" id="PRO_0000349930" description="Ribosomal RNA large subunit methyltransferase F">
    <location>
        <begin position="1"/>
        <end position="340"/>
    </location>
</feature>
<feature type="region of interest" description="Disordered" evidence="2">
    <location>
        <begin position="1"/>
        <end position="36"/>
    </location>
</feature>
<reference key="1">
    <citation type="journal article" date="2009" name="Genome Biol.">
        <title>Genomic and genetic analyses of diversity and plant interactions of Pseudomonas fluorescens.</title>
        <authorList>
            <person name="Silby M.W."/>
            <person name="Cerdeno-Tarraga A.M."/>
            <person name="Vernikos G.S."/>
            <person name="Giddens S.R."/>
            <person name="Jackson R.W."/>
            <person name="Preston G.M."/>
            <person name="Zhang X.-X."/>
            <person name="Moon C.D."/>
            <person name="Gehrig S.M."/>
            <person name="Godfrey S.A.C."/>
            <person name="Knight C.G."/>
            <person name="Malone J.G."/>
            <person name="Robinson Z."/>
            <person name="Spiers A.J."/>
            <person name="Harris S."/>
            <person name="Challis G.L."/>
            <person name="Yaxley A.M."/>
            <person name="Harris D."/>
            <person name="Seeger K."/>
            <person name="Murphy L."/>
            <person name="Rutter S."/>
            <person name="Squares R."/>
            <person name="Quail M.A."/>
            <person name="Saunders E."/>
            <person name="Mavromatis K."/>
            <person name="Brettin T.S."/>
            <person name="Bentley S.D."/>
            <person name="Hothersall J."/>
            <person name="Stephens E."/>
            <person name="Thomas C.M."/>
            <person name="Parkhill J."/>
            <person name="Levy S.B."/>
            <person name="Rainey P.B."/>
            <person name="Thomson N.R."/>
        </authorList>
    </citation>
    <scope>NUCLEOTIDE SEQUENCE [LARGE SCALE GENOMIC DNA]</scope>
    <source>
        <strain>Pf0-1</strain>
    </source>
</reference>
<organism>
    <name type="scientific">Pseudomonas fluorescens (strain Pf0-1)</name>
    <dbReference type="NCBI Taxonomy" id="205922"/>
    <lineage>
        <taxon>Bacteria</taxon>
        <taxon>Pseudomonadati</taxon>
        <taxon>Pseudomonadota</taxon>
        <taxon>Gammaproteobacteria</taxon>
        <taxon>Pseudomonadales</taxon>
        <taxon>Pseudomonadaceae</taxon>
        <taxon>Pseudomonas</taxon>
    </lineage>
</organism>
<gene>
    <name evidence="1" type="primary">rlmF</name>
    <name type="ordered locus">Pfl01_0985</name>
</gene>
<accession>Q3KHM8</accession>
<protein>
    <recommendedName>
        <fullName evidence="1">Ribosomal RNA large subunit methyltransferase F</fullName>
        <ecNumber evidence="1">2.1.1.181</ecNumber>
    </recommendedName>
    <alternativeName>
        <fullName evidence="1">23S rRNA mA1618 methyltransferase</fullName>
    </alternativeName>
    <alternativeName>
        <fullName evidence="1">rRNA adenine N-6-methyltransferase</fullName>
    </alternativeName>
</protein>
<keyword id="KW-0963">Cytoplasm</keyword>
<keyword id="KW-0489">Methyltransferase</keyword>
<keyword id="KW-0698">rRNA processing</keyword>
<keyword id="KW-0949">S-adenosyl-L-methionine</keyword>
<keyword id="KW-0808">Transferase</keyword>
<dbReference type="EC" id="2.1.1.181" evidence="1"/>
<dbReference type="EMBL" id="CP000094">
    <property type="protein sequence ID" value="ABA72728.1"/>
    <property type="molecule type" value="Genomic_DNA"/>
</dbReference>
<dbReference type="RefSeq" id="WP_011332580.1">
    <property type="nucleotide sequence ID" value="NC_007492.2"/>
</dbReference>
<dbReference type="SMR" id="Q3KHM8"/>
<dbReference type="KEGG" id="pfo:Pfl01_0985"/>
<dbReference type="eggNOG" id="COG3129">
    <property type="taxonomic scope" value="Bacteria"/>
</dbReference>
<dbReference type="HOGENOM" id="CLU_027534_3_0_6"/>
<dbReference type="Proteomes" id="UP000002704">
    <property type="component" value="Chromosome"/>
</dbReference>
<dbReference type="GO" id="GO:0005737">
    <property type="term" value="C:cytoplasm"/>
    <property type="evidence" value="ECO:0007669"/>
    <property type="project" value="UniProtKB-SubCell"/>
</dbReference>
<dbReference type="GO" id="GO:0052907">
    <property type="term" value="F:23S rRNA (adenine(1618)-N(6))-methyltransferase activity"/>
    <property type="evidence" value="ECO:0007669"/>
    <property type="project" value="UniProtKB-EC"/>
</dbReference>
<dbReference type="GO" id="GO:0070475">
    <property type="term" value="P:rRNA base methylation"/>
    <property type="evidence" value="ECO:0007669"/>
    <property type="project" value="TreeGrafter"/>
</dbReference>
<dbReference type="CDD" id="cd02440">
    <property type="entry name" value="AdoMet_MTases"/>
    <property type="match status" value="1"/>
</dbReference>
<dbReference type="Gene3D" id="3.40.50.150">
    <property type="entry name" value="Vaccinia Virus protein VP39"/>
    <property type="match status" value="1"/>
</dbReference>
<dbReference type="HAMAP" id="MF_01848">
    <property type="entry name" value="23SrRNA_methyltr_F"/>
    <property type="match status" value="1"/>
</dbReference>
<dbReference type="InterPro" id="IPR010286">
    <property type="entry name" value="METTL16/RlmF"/>
</dbReference>
<dbReference type="InterPro" id="IPR016909">
    <property type="entry name" value="rRNA_lsu_MeTfrase_F"/>
</dbReference>
<dbReference type="InterPro" id="IPR029063">
    <property type="entry name" value="SAM-dependent_MTases_sf"/>
</dbReference>
<dbReference type="NCBIfam" id="NF008725">
    <property type="entry name" value="PRK11727.1"/>
    <property type="match status" value="1"/>
</dbReference>
<dbReference type="PANTHER" id="PTHR13393:SF0">
    <property type="entry name" value="RNA N6-ADENOSINE-METHYLTRANSFERASE METTL16"/>
    <property type="match status" value="1"/>
</dbReference>
<dbReference type="PANTHER" id="PTHR13393">
    <property type="entry name" value="SAM-DEPENDENT METHYLTRANSFERASE"/>
    <property type="match status" value="1"/>
</dbReference>
<dbReference type="Pfam" id="PF05971">
    <property type="entry name" value="Methyltransf_10"/>
    <property type="match status" value="1"/>
</dbReference>
<dbReference type="PIRSF" id="PIRSF029038">
    <property type="entry name" value="Mtase_YbiN_prd"/>
    <property type="match status" value="1"/>
</dbReference>
<dbReference type="SUPFAM" id="SSF53335">
    <property type="entry name" value="S-adenosyl-L-methionine-dependent methyltransferases"/>
    <property type="match status" value="1"/>
</dbReference>
<name>RLMF_PSEPF</name>
<proteinExistence type="inferred from homology"/>
<comment type="function">
    <text evidence="1">Specifically methylates the adenine in position 1618 of 23S rRNA.</text>
</comment>
<comment type="catalytic activity">
    <reaction evidence="1">
        <text>adenosine(1618) in 23S rRNA + S-adenosyl-L-methionine = N(6)-methyladenosine(1618) in 23S rRNA + S-adenosyl-L-homocysteine + H(+)</text>
        <dbReference type="Rhea" id="RHEA:16497"/>
        <dbReference type="Rhea" id="RHEA-COMP:10229"/>
        <dbReference type="Rhea" id="RHEA-COMP:10231"/>
        <dbReference type="ChEBI" id="CHEBI:15378"/>
        <dbReference type="ChEBI" id="CHEBI:57856"/>
        <dbReference type="ChEBI" id="CHEBI:59789"/>
        <dbReference type="ChEBI" id="CHEBI:74411"/>
        <dbReference type="ChEBI" id="CHEBI:74449"/>
        <dbReference type="EC" id="2.1.1.181"/>
    </reaction>
</comment>
<comment type="subcellular location">
    <subcellularLocation>
        <location evidence="1">Cytoplasm</location>
    </subcellularLocation>
</comment>
<comment type="similarity">
    <text evidence="1">Belongs to the methyltransferase superfamily. METTL16/RlmF family.</text>
</comment>
<evidence type="ECO:0000255" key="1">
    <source>
        <dbReference type="HAMAP-Rule" id="MF_01848"/>
    </source>
</evidence>
<evidence type="ECO:0000256" key="2">
    <source>
        <dbReference type="SAM" id="MobiDB-lite"/>
    </source>
</evidence>